<accession>A1A652</accession>
<keyword id="KW-1003">Cell membrane</keyword>
<keyword id="KW-0325">Glycoprotein</keyword>
<keyword id="KW-0406">Ion transport</keyword>
<keyword id="KW-0408">Iron</keyword>
<keyword id="KW-0410">Iron transport</keyword>
<keyword id="KW-0472">Membrane</keyword>
<keyword id="KW-1185">Reference proteome</keyword>
<keyword id="KW-0812">Transmembrane</keyword>
<keyword id="KW-1133">Transmembrane helix</keyword>
<keyword id="KW-0813">Transport</keyword>
<keyword id="KW-0843">Virulence</keyword>
<evidence type="ECO:0000255" key="1"/>
<evidence type="ECO:0000255" key="2">
    <source>
        <dbReference type="PROSITE-ProRule" id="PRU00498"/>
    </source>
</evidence>
<evidence type="ECO:0000256" key="3">
    <source>
        <dbReference type="SAM" id="MobiDB-lite"/>
    </source>
</evidence>
<evidence type="ECO:0000269" key="4">
    <source>
    </source>
</evidence>
<evidence type="ECO:0000303" key="5">
    <source>
    </source>
</evidence>
<evidence type="ECO:0000305" key="6"/>
<sequence>MSATGNKVFAPAIFFIAAREALEASLVIGILSGMLENLVVHTKSAEDLAAHDSLTESEKHEVEQKKRALVRKLRKIVLLGALTGLLIAFAIGAAFLAVFYTQVNDLYGKAEELWEGIFNLVAVLLITPMSLAILRAGNSKRKWKRKLENAFSHQNIQPNHRRDEEGEATVVNANHSDDSASASSSSARQAAEEEAGTKTTRTEKLNPLEAVDVVPSMSGDQRRKRGGLRGLFSKPSGAVNDLKLRMNRGTLALFTIPLITTLREGLEGVVFIGGVSLGLPATSIPLPAIVGLAVGLGIGFLIFRSGNLVSVRIFLVFSTCFLLLIASGMASRSVYYLQFYAYVQLVGDSAAESGDGPGSYNSQGYIWHFNCCNPEANKGGTGWGILNSLVGWNNTATYGSVFMYIGYWFAVAGYLWYQIWSEGRLALRFGGKTYWESNRSIQARQRKQEKAHQRQLREADQEEHGHSSNSDKQQHPSEAGPSTLSH</sequence>
<comment type="function">
    <text evidence="4">Permease for high affinity iron uptake (PubMed:17138696).</text>
</comment>
<comment type="subcellular location">
    <subcellularLocation>
        <location evidence="4">Cell membrane</location>
        <topology evidence="1">Multi-pass membrane protein</topology>
    </subcellularLocation>
</comment>
<comment type="induction">
    <text evidence="4">Expression regulated by iron through the urbs1 transcription factor (PubMed:17138696). During pathogenic development, expression is confined to the phase of hyphal proliferation inside the plant (PubMed:17138696).</text>
</comment>
<comment type="disruption phenotype">
    <text evidence="4">Strongly reduces virulence (PubMed:17138696).</text>
</comment>
<comment type="similarity">
    <text evidence="6">Belongs to the oxidase-dependent Fe transporter (OFeT) (TC 9.A.10.1) family.</text>
</comment>
<name>FER2_MYCMD</name>
<proteinExistence type="evidence at transcript level"/>
<gene>
    <name evidence="5" type="primary">fer2</name>
    <name type="ORF">UMAG_10023</name>
</gene>
<protein>
    <recommendedName>
        <fullName evidence="5">High-affinity iron permease fer2</fullName>
    </recommendedName>
    <alternativeName>
        <fullName evidence="5">Fe-regulated protein 2</fullName>
    </alternativeName>
</protein>
<dbReference type="EMBL" id="CM003140">
    <property type="protein sequence ID" value="KIS71665.1"/>
    <property type="molecule type" value="Genomic_DNA"/>
</dbReference>
<dbReference type="EMBL" id="BK004082">
    <property type="protein sequence ID" value="DAA04933.1"/>
    <property type="molecule type" value="Genomic_DNA"/>
</dbReference>
<dbReference type="RefSeq" id="XP_011386613.1">
    <property type="nucleotide sequence ID" value="XM_011388311.1"/>
</dbReference>
<dbReference type="FunCoup" id="A1A652">
    <property type="interactions" value="38"/>
</dbReference>
<dbReference type="STRING" id="237631.A1A652"/>
<dbReference type="GlyCosmos" id="A1A652">
    <property type="glycosylation" value="3 sites, No reported glycans"/>
</dbReference>
<dbReference type="EnsemblFungi" id="KIS71665">
    <property type="protein sequence ID" value="KIS71665"/>
    <property type="gene ID" value="UMAG_10023"/>
</dbReference>
<dbReference type="GeneID" id="23566099"/>
<dbReference type="KEGG" id="uma:UMAG_10023"/>
<dbReference type="VEuPathDB" id="FungiDB:UMAG_10023"/>
<dbReference type="eggNOG" id="ENOG502QQWE">
    <property type="taxonomic scope" value="Eukaryota"/>
</dbReference>
<dbReference type="InParanoid" id="A1A652"/>
<dbReference type="OrthoDB" id="4364at2759"/>
<dbReference type="PHI-base" id="PHI:3918"/>
<dbReference type="Proteomes" id="UP000000561">
    <property type="component" value="Chromosome 1"/>
</dbReference>
<dbReference type="GO" id="GO:0033573">
    <property type="term" value="C:high-affinity iron permease complex"/>
    <property type="evidence" value="ECO:0000318"/>
    <property type="project" value="GO_Central"/>
</dbReference>
<dbReference type="GO" id="GO:0005886">
    <property type="term" value="C:plasma membrane"/>
    <property type="evidence" value="ECO:0000318"/>
    <property type="project" value="GO_Central"/>
</dbReference>
<dbReference type="GO" id="GO:0015093">
    <property type="term" value="F:ferrous iron transmembrane transporter activity"/>
    <property type="evidence" value="ECO:0000318"/>
    <property type="project" value="GO_Central"/>
</dbReference>
<dbReference type="GO" id="GO:0034755">
    <property type="term" value="P:iron ion transmembrane transport"/>
    <property type="evidence" value="ECO:0000318"/>
    <property type="project" value="GO_Central"/>
</dbReference>
<dbReference type="InterPro" id="IPR004923">
    <property type="entry name" value="FTR1/Fip1/EfeU"/>
</dbReference>
<dbReference type="PANTHER" id="PTHR31632">
    <property type="entry name" value="IRON TRANSPORTER FTH1"/>
    <property type="match status" value="1"/>
</dbReference>
<dbReference type="PANTHER" id="PTHR31632:SF2">
    <property type="entry name" value="PLASMA MEMBRANE IRON PERMEASE"/>
    <property type="match status" value="1"/>
</dbReference>
<dbReference type="Pfam" id="PF03239">
    <property type="entry name" value="FTR1"/>
    <property type="match status" value="1"/>
</dbReference>
<organism>
    <name type="scientific">Mycosarcoma maydis</name>
    <name type="common">Corn smut fungus</name>
    <name type="synonym">Ustilago maydis</name>
    <dbReference type="NCBI Taxonomy" id="5270"/>
    <lineage>
        <taxon>Eukaryota</taxon>
        <taxon>Fungi</taxon>
        <taxon>Dikarya</taxon>
        <taxon>Basidiomycota</taxon>
        <taxon>Ustilaginomycotina</taxon>
        <taxon>Ustilaginomycetes</taxon>
        <taxon>Ustilaginales</taxon>
        <taxon>Ustilaginaceae</taxon>
        <taxon>Mycosarcoma</taxon>
    </lineage>
</organism>
<reference key="1">
    <citation type="journal article" date="2006" name="Nature">
        <title>Insights from the genome of the biotrophic fungal plant pathogen Ustilago maydis.</title>
        <authorList>
            <person name="Kaemper J."/>
            <person name="Kahmann R."/>
            <person name="Boelker M."/>
            <person name="Ma L.-J."/>
            <person name="Brefort T."/>
            <person name="Saville B.J."/>
            <person name="Banuett F."/>
            <person name="Kronstad J.W."/>
            <person name="Gold S.E."/>
            <person name="Mueller O."/>
            <person name="Perlin M.H."/>
            <person name="Woesten H.A.B."/>
            <person name="de Vries R."/>
            <person name="Ruiz-Herrera J."/>
            <person name="Reynaga-Pena C.G."/>
            <person name="Snetselaar K."/>
            <person name="McCann M."/>
            <person name="Perez-Martin J."/>
            <person name="Feldbruegge M."/>
            <person name="Basse C.W."/>
            <person name="Steinberg G."/>
            <person name="Ibeas J.I."/>
            <person name="Holloman W."/>
            <person name="Guzman P."/>
            <person name="Farman M.L."/>
            <person name="Stajich J.E."/>
            <person name="Sentandreu R."/>
            <person name="Gonzalez-Prieto J.M."/>
            <person name="Kennell J.C."/>
            <person name="Molina L."/>
            <person name="Schirawski J."/>
            <person name="Mendoza-Mendoza A."/>
            <person name="Greilinger D."/>
            <person name="Muench K."/>
            <person name="Roessel N."/>
            <person name="Scherer M."/>
            <person name="Vranes M."/>
            <person name="Ladendorf O."/>
            <person name="Vincon V."/>
            <person name="Fuchs U."/>
            <person name="Sandrock B."/>
            <person name="Meng S."/>
            <person name="Ho E.C.H."/>
            <person name="Cahill M.J."/>
            <person name="Boyce K.J."/>
            <person name="Klose J."/>
            <person name="Klosterman S.J."/>
            <person name="Deelstra H.J."/>
            <person name="Ortiz-Castellanos L."/>
            <person name="Li W."/>
            <person name="Sanchez-Alonso P."/>
            <person name="Schreier P.H."/>
            <person name="Haeuser-Hahn I."/>
            <person name="Vaupel M."/>
            <person name="Koopmann E."/>
            <person name="Friedrich G."/>
            <person name="Voss H."/>
            <person name="Schlueter T."/>
            <person name="Margolis J."/>
            <person name="Platt D."/>
            <person name="Swimmer C."/>
            <person name="Gnirke A."/>
            <person name="Chen F."/>
            <person name="Vysotskaia V."/>
            <person name="Mannhaupt G."/>
            <person name="Gueldener U."/>
            <person name="Muensterkoetter M."/>
            <person name="Haase D."/>
            <person name="Oesterheld M."/>
            <person name="Mewes H.-W."/>
            <person name="Mauceli E.W."/>
            <person name="DeCaprio D."/>
            <person name="Wade C.M."/>
            <person name="Butler J."/>
            <person name="Young S.K."/>
            <person name="Jaffe D.B."/>
            <person name="Calvo S.E."/>
            <person name="Nusbaum C."/>
            <person name="Galagan J.E."/>
            <person name="Birren B.W."/>
        </authorList>
    </citation>
    <scope>NUCLEOTIDE SEQUENCE [LARGE SCALE GENOMIC DNA]</scope>
    <source>
        <strain>DSM 14603 / FGSC 9021 / UM521</strain>
    </source>
</reference>
<reference key="2">
    <citation type="submission" date="2014-09" db="EMBL/GenBank/DDBJ databases">
        <authorList>
            <person name="Gueldener U."/>
            <person name="Muensterkoetter M."/>
            <person name="Walter M.C."/>
            <person name="Mannhaupt G."/>
            <person name="Kahmann R."/>
        </authorList>
    </citation>
    <scope>GENOME REANNOTATION</scope>
    <source>
        <strain>DSM 14603 / FGSC 9021 / UM521</strain>
    </source>
</reference>
<reference key="3">
    <citation type="journal article" date="2006" name="Plant Cell">
        <title>A ferroxidation/permeation iron uptake system is required for virulence in Ustilago maydis.</title>
        <authorList>
            <person name="Eichhorn H."/>
            <person name="Lessing F."/>
            <person name="Winterberg B."/>
            <person name="Schirawski J."/>
            <person name="Kamper J."/>
            <person name="Muller P."/>
            <person name="Kahmann R."/>
        </authorList>
    </citation>
    <scope>INDUCTION</scope>
    <scope>FUNCTION</scope>
    <scope>SUBCELLULAR LOCATION</scope>
    <scope>DISRUPTION PHENOTYPE</scope>
    <source>
        <strain>DSM 14603 / FGSC 9021 / UM521</strain>
    </source>
</reference>
<feature type="chain" id="PRO_0000441958" description="High-affinity iron permease fer2">
    <location>
        <begin position="1"/>
        <end position="486"/>
    </location>
</feature>
<feature type="transmembrane region" description="Helical" evidence="1">
    <location>
        <begin position="76"/>
        <end position="96"/>
    </location>
</feature>
<feature type="transmembrane region" description="Helical" evidence="1">
    <location>
        <begin position="113"/>
        <end position="133"/>
    </location>
</feature>
<feature type="transmembrane region" description="Helical" evidence="1">
    <location>
        <begin position="252"/>
        <end position="272"/>
    </location>
</feature>
<feature type="transmembrane region" description="Helical" evidence="1">
    <location>
        <begin position="283"/>
        <end position="303"/>
    </location>
</feature>
<feature type="transmembrane region" description="Helical" evidence="1">
    <location>
        <begin position="308"/>
        <end position="328"/>
    </location>
</feature>
<feature type="transmembrane region" description="Helical" evidence="1">
    <location>
        <begin position="400"/>
        <end position="420"/>
    </location>
</feature>
<feature type="region of interest" description="Disordered" evidence="3">
    <location>
        <begin position="175"/>
        <end position="209"/>
    </location>
</feature>
<feature type="region of interest" description="Disordered" evidence="3">
    <location>
        <begin position="441"/>
        <end position="486"/>
    </location>
</feature>
<feature type="compositionally biased region" description="Low complexity" evidence="3">
    <location>
        <begin position="179"/>
        <end position="189"/>
    </location>
</feature>
<feature type="compositionally biased region" description="Basic and acidic residues" evidence="3">
    <location>
        <begin position="446"/>
        <end position="466"/>
    </location>
</feature>
<feature type="glycosylation site" description="N-linked (GlcNAc...) asparagine" evidence="2">
    <location>
        <position position="174"/>
    </location>
</feature>
<feature type="glycosylation site" description="N-linked (GlcNAc...) asparagine" evidence="2">
    <location>
        <position position="393"/>
    </location>
</feature>
<feature type="glycosylation site" description="N-linked (GlcNAc...) asparagine" evidence="2">
    <location>
        <position position="438"/>
    </location>
</feature>